<gene>
    <name evidence="6" type="primary">SMXL7</name>
    <name evidence="11" type="ordered locus">At2g29970</name>
    <name evidence="12" type="ORF">F23F1.11</name>
</gene>
<comment type="function">
    <text evidence="4 5">Probable component of a transcriptional corepressor complex involved in branching control. Regulates cotyledon expansion and lateral root growth, but not germination or hypocotyl elongation. Promotes auxin transport and PIN1 accumulation in the stem and represses BRC1/TCP18 expression in axillary buds (PubMed:26546446, PubMed:26546447).</text>
</comment>
<comment type="subunit">
    <text evidence="3 4 5">Interacts with TPL/TPR in an EAR-motif dependent manner (PubMed:26546447). Interacts with TPL, TPR1, TPR2 and TPR4 (PubMed:26546447). Interacts with MAX2 and TPR2 (PubMed:26546446). Interacts with D14 (PubMed:25713176, PubMed:26546446). The interaction with D14 occurs in the presence of (2'R) stereoisomers of strigolactones, but not (2'S) stereoisomers (PubMed:25713176).</text>
</comment>
<comment type="subcellular location">
    <subcellularLocation>
        <location evidence="4">Nucleus</location>
    </subcellularLocation>
</comment>
<comment type="tissue specificity">
    <text evidence="2 5">Expressed in axillary branches and roots. Detected in seedlings and leaves (PubMed:23893171). Expressed in the primary rosette buds and expanding leaves of adult rosettes, the vasculature of the hypocotyls, cotyledons, and mature roots, and in the midvein and petioles of young leaves (PubMed:26546447).</text>
</comment>
<comment type="induction">
    <text evidence="2">Up-regulated by strigolactone treatment.</text>
</comment>
<comment type="domain">
    <text evidence="4 5">Contains 1 EAR motif required for the interaction with TPR2.</text>
</comment>
<comment type="PTM">
    <text evidence="4 5">Ubiquitinated upon strigolactone treatment. Strigolactone, but not karrikin, triggers rapid SCF(MAX2)-dependent degradation (PubMed:26546446, PubMed:26546447).</text>
</comment>
<comment type="disruption phenotype">
    <text evidence="5">No visible phenotype. Suppresses max2 phenotypes associated with strigolactone-D14-regulated growth. Smxl7 and max2 double mutants have reduced branching and increased inflorescence heights compared with max2 mutants.</text>
</comment>
<comment type="similarity">
    <text evidence="9">Belongs to the ClpA/ClpB family.</text>
</comment>
<keyword id="KW-0539">Nucleus</keyword>
<keyword id="KW-1185">Reference proteome</keyword>
<keyword id="KW-0677">Repeat</keyword>
<keyword id="KW-0804">Transcription</keyword>
<keyword id="KW-0805">Transcription regulation</keyword>
<keyword id="KW-0832">Ubl conjugation</keyword>
<dbReference type="EMBL" id="AC004680">
    <property type="protein sequence ID" value="AAC31855.1"/>
    <property type="molecule type" value="Genomic_DNA"/>
</dbReference>
<dbReference type="EMBL" id="CP002685">
    <property type="protein sequence ID" value="AEC08329.1"/>
    <property type="molecule type" value="Genomic_DNA"/>
</dbReference>
<dbReference type="EMBL" id="AY039922">
    <property type="protein sequence ID" value="AAK64026.1"/>
    <property type="molecule type" value="mRNA"/>
</dbReference>
<dbReference type="PIR" id="T02488">
    <property type="entry name" value="T02488"/>
</dbReference>
<dbReference type="RefSeq" id="NP_565689.1">
    <property type="nucleotide sequence ID" value="NM_128551.4"/>
</dbReference>
<dbReference type="FunCoup" id="O80875">
    <property type="interactions" value="1069"/>
</dbReference>
<dbReference type="IntAct" id="O80875">
    <property type="interactions" value="1"/>
</dbReference>
<dbReference type="STRING" id="3702.O80875"/>
<dbReference type="iPTMnet" id="O80875"/>
<dbReference type="PaxDb" id="3702-AT2G29970.1"/>
<dbReference type="ProteomicsDB" id="232477"/>
<dbReference type="EnsemblPlants" id="AT2G29970.1">
    <property type="protein sequence ID" value="AT2G29970.1"/>
    <property type="gene ID" value="AT2G29970"/>
</dbReference>
<dbReference type="GeneID" id="817547"/>
<dbReference type="Gramene" id="AT2G29970.1">
    <property type="protein sequence ID" value="AT2G29970.1"/>
    <property type="gene ID" value="AT2G29970"/>
</dbReference>
<dbReference type="KEGG" id="ath:AT2G29970"/>
<dbReference type="Araport" id="AT2G29970"/>
<dbReference type="TAIR" id="AT2G29970">
    <property type="gene designation" value="SMXL7"/>
</dbReference>
<dbReference type="eggNOG" id="KOG1051">
    <property type="taxonomic scope" value="Eukaryota"/>
</dbReference>
<dbReference type="HOGENOM" id="CLU_006575_0_2_1"/>
<dbReference type="InParanoid" id="O80875"/>
<dbReference type="PhylomeDB" id="O80875"/>
<dbReference type="PRO" id="PR:O80875"/>
<dbReference type="Proteomes" id="UP000006548">
    <property type="component" value="Chromosome 2"/>
</dbReference>
<dbReference type="ExpressionAtlas" id="O80875">
    <property type="expression patterns" value="baseline and differential"/>
</dbReference>
<dbReference type="GO" id="GO:0005634">
    <property type="term" value="C:nucleus"/>
    <property type="evidence" value="ECO:0007669"/>
    <property type="project" value="UniProtKB-SubCell"/>
</dbReference>
<dbReference type="GO" id="GO:0005524">
    <property type="term" value="F:ATP binding"/>
    <property type="evidence" value="ECO:0007669"/>
    <property type="project" value="InterPro"/>
</dbReference>
<dbReference type="GO" id="GO:0016887">
    <property type="term" value="F:ATP hydrolysis activity"/>
    <property type="evidence" value="ECO:0007669"/>
    <property type="project" value="InterPro"/>
</dbReference>
<dbReference type="CDD" id="cd19499">
    <property type="entry name" value="RecA-like_ClpB_Hsp104-like"/>
    <property type="match status" value="1"/>
</dbReference>
<dbReference type="Gene3D" id="1.10.1780.10">
    <property type="entry name" value="Clp, N-terminal domain"/>
    <property type="match status" value="1"/>
</dbReference>
<dbReference type="Gene3D" id="3.40.50.300">
    <property type="entry name" value="P-loop containing nucleotide triphosphate hydrolases"/>
    <property type="match status" value="1"/>
</dbReference>
<dbReference type="InterPro" id="IPR003959">
    <property type="entry name" value="ATPase_AAA_core"/>
</dbReference>
<dbReference type="InterPro" id="IPR036628">
    <property type="entry name" value="Clp_N_dom_sf"/>
</dbReference>
<dbReference type="InterPro" id="IPR004176">
    <property type="entry name" value="Clp_R_dom"/>
</dbReference>
<dbReference type="InterPro" id="IPR027417">
    <property type="entry name" value="P-loop_NTPase"/>
</dbReference>
<dbReference type="InterPro" id="IPR051650">
    <property type="entry name" value="SL_signaling_regulator"/>
</dbReference>
<dbReference type="PANTHER" id="PTHR43572">
    <property type="entry name" value="CHAPERONE PROTEIN CLPD, CHLOROPLASTIC"/>
    <property type="match status" value="1"/>
</dbReference>
<dbReference type="PANTHER" id="PTHR43572:SF54">
    <property type="entry name" value="PROTEIN SMAX1-LIKE 7"/>
    <property type="match status" value="1"/>
</dbReference>
<dbReference type="Pfam" id="PF07724">
    <property type="entry name" value="AAA_2"/>
    <property type="match status" value="1"/>
</dbReference>
<dbReference type="SUPFAM" id="SSF52540">
    <property type="entry name" value="P-loop containing nucleoside triphosphate hydrolases"/>
    <property type="match status" value="1"/>
</dbReference>
<dbReference type="PROSITE" id="PS51903">
    <property type="entry name" value="CLP_R"/>
    <property type="match status" value="1"/>
</dbReference>
<name>SMXL7_ARATH</name>
<organism>
    <name type="scientific">Arabidopsis thaliana</name>
    <name type="common">Mouse-ear cress</name>
    <dbReference type="NCBI Taxonomy" id="3702"/>
    <lineage>
        <taxon>Eukaryota</taxon>
        <taxon>Viridiplantae</taxon>
        <taxon>Streptophyta</taxon>
        <taxon>Embryophyta</taxon>
        <taxon>Tracheophyta</taxon>
        <taxon>Spermatophyta</taxon>
        <taxon>Magnoliopsida</taxon>
        <taxon>eudicotyledons</taxon>
        <taxon>Gunneridae</taxon>
        <taxon>Pentapetalae</taxon>
        <taxon>rosids</taxon>
        <taxon>malvids</taxon>
        <taxon>Brassicales</taxon>
        <taxon>Brassicaceae</taxon>
        <taxon>Camelineae</taxon>
        <taxon>Arabidopsis</taxon>
    </lineage>
</organism>
<feature type="chain" id="PRO_0000435716" description="Protein SMAX1-LIKE 7">
    <location>
        <begin position="1"/>
        <end position="1002"/>
    </location>
</feature>
<feature type="domain" description="Clp R" evidence="1">
    <location>
        <begin position="8"/>
        <end position="185"/>
    </location>
</feature>
<feature type="region of interest" description="Repeat 1" evidence="1">
    <location>
        <begin position="12"/>
        <end position="86"/>
    </location>
</feature>
<feature type="region of interest" description="Repeat 2" evidence="1">
    <location>
        <begin position="103"/>
        <end position="185"/>
    </location>
</feature>
<feature type="short sequence motif" description="EAR" evidence="10">
    <location>
        <begin position="854"/>
        <end position="858"/>
    </location>
</feature>
<feature type="mutagenesis site" description="Resistant to degradation after strigolactone treatment." evidence="5">
    <location>
        <begin position="718"/>
        <end position="725"/>
    </location>
</feature>
<feature type="mutagenesis site" description="Loss of interaction with TPR2." evidence="4">
    <location>
        <begin position="854"/>
        <end position="859"/>
    </location>
</feature>
<feature type="sequence conflict" description="In Ref. 3; AAK64026." evidence="9" ref="3">
    <original>D</original>
    <variation>G</variation>
    <location>
        <position position="736"/>
    </location>
</feature>
<reference key="1">
    <citation type="journal article" date="1999" name="Nature">
        <title>Sequence and analysis of chromosome 2 of the plant Arabidopsis thaliana.</title>
        <authorList>
            <person name="Lin X."/>
            <person name="Kaul S."/>
            <person name="Rounsley S.D."/>
            <person name="Shea T.P."/>
            <person name="Benito M.-I."/>
            <person name="Town C.D."/>
            <person name="Fujii C.Y."/>
            <person name="Mason T.M."/>
            <person name="Bowman C.L."/>
            <person name="Barnstead M.E."/>
            <person name="Feldblyum T.V."/>
            <person name="Buell C.R."/>
            <person name="Ketchum K.A."/>
            <person name="Lee J.J."/>
            <person name="Ronning C.M."/>
            <person name="Koo H.L."/>
            <person name="Moffat K.S."/>
            <person name="Cronin L.A."/>
            <person name="Shen M."/>
            <person name="Pai G."/>
            <person name="Van Aken S."/>
            <person name="Umayam L."/>
            <person name="Tallon L.J."/>
            <person name="Gill J.E."/>
            <person name="Adams M.D."/>
            <person name="Carrera A.J."/>
            <person name="Creasy T.H."/>
            <person name="Goodman H.M."/>
            <person name="Somerville C.R."/>
            <person name="Copenhaver G.P."/>
            <person name="Preuss D."/>
            <person name="Nierman W.C."/>
            <person name="White O."/>
            <person name="Eisen J.A."/>
            <person name="Salzberg S.L."/>
            <person name="Fraser C.M."/>
            <person name="Venter J.C."/>
        </authorList>
    </citation>
    <scope>NUCLEOTIDE SEQUENCE [LARGE SCALE GENOMIC DNA]</scope>
    <source>
        <strain>cv. Columbia</strain>
    </source>
</reference>
<reference key="2">
    <citation type="journal article" date="2017" name="Plant J.">
        <title>Araport11: a complete reannotation of the Arabidopsis thaliana reference genome.</title>
        <authorList>
            <person name="Cheng C.Y."/>
            <person name="Krishnakumar V."/>
            <person name="Chan A.P."/>
            <person name="Thibaud-Nissen F."/>
            <person name="Schobel S."/>
            <person name="Town C.D."/>
        </authorList>
    </citation>
    <scope>GENOME REANNOTATION</scope>
    <source>
        <strain>cv. Columbia</strain>
    </source>
</reference>
<reference key="3">
    <citation type="journal article" date="2003" name="Science">
        <title>Empirical analysis of transcriptional activity in the Arabidopsis genome.</title>
        <authorList>
            <person name="Yamada K."/>
            <person name="Lim J."/>
            <person name="Dale J.M."/>
            <person name="Chen H."/>
            <person name="Shinn P."/>
            <person name="Palm C.J."/>
            <person name="Southwick A.M."/>
            <person name="Wu H.C."/>
            <person name="Kim C.J."/>
            <person name="Nguyen M."/>
            <person name="Pham P.K."/>
            <person name="Cheuk R.F."/>
            <person name="Karlin-Newmann G."/>
            <person name="Liu S.X."/>
            <person name="Lam B."/>
            <person name="Sakano H."/>
            <person name="Wu T."/>
            <person name="Yu G."/>
            <person name="Miranda M."/>
            <person name="Quach H.L."/>
            <person name="Tripp M."/>
            <person name="Chang C.H."/>
            <person name="Lee J.M."/>
            <person name="Toriumi M.J."/>
            <person name="Chan M.M."/>
            <person name="Tang C.C."/>
            <person name="Onodera C.S."/>
            <person name="Deng J.M."/>
            <person name="Akiyama K."/>
            <person name="Ansari Y."/>
            <person name="Arakawa T."/>
            <person name="Banh J."/>
            <person name="Banno F."/>
            <person name="Bowser L."/>
            <person name="Brooks S.Y."/>
            <person name="Carninci P."/>
            <person name="Chao Q."/>
            <person name="Choy N."/>
            <person name="Enju A."/>
            <person name="Goldsmith A.D."/>
            <person name="Gurjal M."/>
            <person name="Hansen N.F."/>
            <person name="Hayashizaki Y."/>
            <person name="Johnson-Hopson C."/>
            <person name="Hsuan V.W."/>
            <person name="Iida K."/>
            <person name="Karnes M."/>
            <person name="Khan S."/>
            <person name="Koesema E."/>
            <person name="Ishida J."/>
            <person name="Jiang P.X."/>
            <person name="Jones T."/>
            <person name="Kawai J."/>
            <person name="Kamiya A."/>
            <person name="Meyers C."/>
            <person name="Nakajima M."/>
            <person name="Narusaka M."/>
            <person name="Seki M."/>
            <person name="Sakurai T."/>
            <person name="Satou M."/>
            <person name="Tamse R."/>
            <person name="Vaysberg M."/>
            <person name="Wallender E.K."/>
            <person name="Wong C."/>
            <person name="Yamamura Y."/>
            <person name="Yuan S."/>
            <person name="Shinozaki K."/>
            <person name="Davis R.W."/>
            <person name="Theologis A."/>
            <person name="Ecker J.R."/>
        </authorList>
    </citation>
    <scope>NUCLEOTIDE SEQUENCE [LARGE SCALE MRNA]</scope>
    <source>
        <strain>cv. Columbia</strain>
    </source>
</reference>
<reference key="4">
    <citation type="journal article" date="2013" name="Nature">
        <title>DWARF 53 acts as a repressor of strigolactone signalling in rice.</title>
        <authorList>
            <person name="Jiang L."/>
            <person name="Liu X."/>
            <person name="Xiong G."/>
            <person name="Liu H."/>
            <person name="Chen F."/>
            <person name="Wang L."/>
            <person name="Meng X."/>
            <person name="Liu G."/>
            <person name="Yu H."/>
            <person name="Yuan Y."/>
            <person name="Yi W."/>
            <person name="Zhao L."/>
            <person name="Ma H."/>
            <person name="He Y."/>
            <person name="Wu Z."/>
            <person name="Melcher K."/>
            <person name="Qian Q."/>
            <person name="Xu H.E."/>
            <person name="Wang Y."/>
            <person name="Li J."/>
        </authorList>
    </citation>
    <scope>IDENTIFICATION</scope>
</reference>
<reference key="5">
    <citation type="journal article" date="2013" name="Plant Physiol.">
        <title>SUPPRESSOR OF MORE AXILLARY GROWTH2 1 controls seed germination and seedling development in Arabidopsis.</title>
        <authorList>
            <person name="Stanga J.P."/>
            <person name="Smith S.M."/>
            <person name="Briggs W.R."/>
            <person name="Nelson D.C."/>
        </authorList>
    </citation>
    <scope>TISSUE SPECIFICITY</scope>
    <scope>INDUCTION BY STRIGOLACTONE</scope>
    <scope>GENE FAMILY</scope>
    <scope>NOMENCLATURE</scope>
</reference>
<reference key="6">
    <citation type="journal article" date="2014" name="Curr. Opin. Plant Biol.">
        <title>Strigolactone signalling: standing on the shoulders of DWARFs.</title>
        <authorList>
            <person name="Bennett T."/>
            <person name="Leyser O."/>
        </authorList>
    </citation>
    <scope>REVIEW</scope>
</reference>
<reference key="7">
    <citation type="journal article" date="2015" name="Plant Cell">
        <title>Strigolactone signaling in Arabidopsis regulates shoot development by targeting D53-like SMXL repressor proteins for ubiquitination and degradation.</title>
        <authorList>
            <person name="Wang L."/>
            <person name="Wang B."/>
            <person name="Jiang L."/>
            <person name="Liu X."/>
            <person name="Li X."/>
            <person name="Lu Z."/>
            <person name="Meng X."/>
            <person name="Wang Y."/>
            <person name="Smith S.M."/>
            <person name="Li J."/>
        </authorList>
    </citation>
    <scope>FUNCTION</scope>
    <scope>SUBCELLULAR LOCATION</scope>
    <scope>INTERACTION WITH MAX2; TPR2 AND D14</scope>
    <scope>MUTAGENESIS OF 854-LEU--PRO-859</scope>
    <scope>UBIQUITINATION</scope>
</reference>
<reference key="8">
    <citation type="journal article" date="2015" name="Plant Cell">
        <title>SMAX1-LIKE/D53 family members enable distinct MAX2-dependent responses to strigolactones and karrikins in Arabidopsis.</title>
        <authorList>
            <person name="Soundappan I."/>
            <person name="Bennett T."/>
            <person name="Morffy N."/>
            <person name="Liang Y."/>
            <person name="Stanga J.P."/>
            <person name="Abbas A."/>
            <person name="Leyser O."/>
            <person name="Nelson D.C."/>
        </authorList>
    </citation>
    <scope>FUNCTION</scope>
    <scope>DISRUPTION PHENOTYPE</scope>
    <scope>MUTAGENESIS OF 718-PHE--ASP-725</scope>
    <scope>TISSUE SPECIFICITY</scope>
    <scope>INTERACTION WITH TPL; TPR1; TPR2 AND TPR4</scope>
    <scope>EAR MOTIF</scope>
</reference>
<reference key="9">
    <citation type="journal article" date="2015" name="Plant Cell Physiol.">
        <title>Structural requirements of strigolactones for shoot branching inhibition in rice and Arabidopsis.</title>
        <authorList>
            <person name="Umehara M."/>
            <person name="Cao M."/>
            <person name="Akiyama K."/>
            <person name="Akatsu T."/>
            <person name="Seto Y."/>
            <person name="Hanada A."/>
            <person name="Li W."/>
            <person name="Takeda-Kamiya N."/>
            <person name="Morimoto Y."/>
            <person name="Yamaguchi S."/>
        </authorList>
    </citation>
    <scope>INTERACTION WITH D14</scope>
</reference>
<sequence length="1002" mass="111924">MPTPVTTARQCLTEETARALDDAVSVARRRSHAQTTSLHAVSGLLTMPSSILREVCISRAAHNTPYSSRLQFRALELCVGVSLDRLPSSKSTPTTTVEEDPPVSNSLMAAIKRSQATQRRHPETYHLHQIHGNNNTETTSVLKVELKYFILSILDDPIVSRVFGEAGFRSTDIKLDVLHPPVTSQFSSRFTSRSRIPPLFLCNLPESDSGRVRFGFPFGDLDENCRRIGEVLARKDKKNPLLVGVCGVEALKTFTDSINRGKFGFLPLEISGLSVVSIKISEVLVDGSRIDIKFDDLGRLKSGMVLNLGELKVLASDVFSVDVIEKFVLKLADLLKLHREKLWFIGSVSSNETYLKLIERFPTIDKDWNLHLLPITSSSQGLYPKSSLMGSFVPFGGFFSSTSDFRIPSSSSMNQTLPRCHLCNEKYEQEVTAFAKSGSMIDDQCSEKLPSWLRNVEHEHEKGNLGKVKDDPNVLASRIPALQKKWDDICQRIHQTPAFPKLSFQPVRPQFPLQLGSSSQTKMSLGSPTEKIVCTRTSESFQGMVALPQNPPHQPGLSVKISKPKHTEDLSSSTTNSPLSFVTTDLGLGTIYASKNQEPSTPVSVERRDFEVIKEKQLLSASRYCKDFKSLRELLSRKVGFQNEAVNAISEIVCGYRDESRRRNNHVATTSNVWLALLGPDKAGKKKVALALAEVFCGGQDNFICVDFKSQDSLDDRFRGKTVVDYIAGEVARRADSVVFIENVEKAEFPDQIRLSEAMRTGKLRDSHGREISMKNVIVVATISGSDKASDCHVLEEPVKYSEERVLNAKNWTLQIKLADTSNVNKNGPNKRRQEEAETEVTELRALKSQRSFLDLNLPVDEIEANEDEAYTMSENTEAWLEDFVEQVDGKVTFKLIDFDELAKNIKRNILSLFHLSFGPETHLEIENDVILKILAALRWSSDEEKTFDQWLQTVLAPSFAKARQKCVPAAPFSVKLVASRESPAEEETTGIQQFPARVEVI</sequence>
<evidence type="ECO:0000255" key="1">
    <source>
        <dbReference type="PROSITE-ProRule" id="PRU01251"/>
    </source>
</evidence>
<evidence type="ECO:0000269" key="2">
    <source>
    </source>
</evidence>
<evidence type="ECO:0000269" key="3">
    <source>
    </source>
</evidence>
<evidence type="ECO:0000269" key="4">
    <source>
    </source>
</evidence>
<evidence type="ECO:0000269" key="5">
    <source>
    </source>
</evidence>
<evidence type="ECO:0000303" key="6">
    <source>
    </source>
</evidence>
<evidence type="ECO:0000303" key="7">
    <source>
    </source>
</evidence>
<evidence type="ECO:0000303" key="8">
    <source>
    </source>
</evidence>
<evidence type="ECO:0000305" key="9"/>
<evidence type="ECO:0000305" key="10">
    <source>
    </source>
</evidence>
<evidence type="ECO:0000312" key="11">
    <source>
        <dbReference type="Araport" id="AT2G29970"/>
    </source>
</evidence>
<evidence type="ECO:0000312" key="12">
    <source>
        <dbReference type="EMBL" id="AAC31855.1"/>
    </source>
</evidence>
<accession>O80875</accession>
<accession>Q94BS5</accession>
<proteinExistence type="evidence at protein level"/>
<protein>
    <recommendedName>
        <fullName evidence="6">Protein SMAX1-LIKE 7</fullName>
        <shortName evidence="6">AtSMXL7</shortName>
    </recommendedName>
    <alternativeName>
        <fullName evidence="7">Protein D53-like 1</fullName>
        <shortName evidence="7">AtD53-like 1</shortName>
    </alternativeName>
    <alternativeName>
        <fullName evidence="8">Protein D53-like SMXL 7</fullName>
    </alternativeName>
</protein>